<evidence type="ECO:0000255" key="1">
    <source>
        <dbReference type="HAMAP-Rule" id="MF_01631"/>
    </source>
</evidence>
<evidence type="ECO:0000256" key="2">
    <source>
        <dbReference type="SAM" id="MobiDB-lite"/>
    </source>
</evidence>
<accession>A1TEF5</accession>
<sequence length="492" mass="50009">MRDAAVVILAAGAGTRMKSDTPKVLHTLAGRSMLSHALHAVAGLEARHLVVVVGKDRERVAPAALEIGQTLGRDVDIAIQDQQRGTGHAVECGLTALPADFTGTVVVTAGDVPLLDTHTLSDLIAAHDAESAAATLLTTTLADPTGYGRILRTQDGGVIGIVEQADATPSQRAITEVNAAVYAFDAGALRSALSRLQADNAQGELYLTDVIAIARSDGGVVRARHIDDAALVAGVNDRVQLADLAAVLNRRIVEGHQRAGVTIIDPASTWIDVDVTIGRDTVVRPGTQLLGATTIGGRAEIGPDTTLADVTVGDGAAVIRTHGTSAVIGDDSVVGPFTYLRPGTELGAAGKLGAFVETKNATIGTGTKVPHLTYVGDADIGEHSNIGASSVFVNYDGETKSRTTIGSHVRTGSDTMFVAPVTVGDGAYTGAGTVVREDVPPGALAVSAGPQRNIEGWVTRKRPGSAAAEAAAAAGAGAGAAAEDQGPEATGE</sequence>
<gene>
    <name evidence="1" type="primary">glmU</name>
    <name type="ordered locus">Mvan_4782</name>
</gene>
<protein>
    <recommendedName>
        <fullName evidence="1">Bifunctional protein GlmU</fullName>
    </recommendedName>
    <domain>
        <recommendedName>
            <fullName evidence="1">UDP-N-acetylglucosamine pyrophosphorylase</fullName>
            <ecNumber evidence="1">2.7.7.23</ecNumber>
        </recommendedName>
        <alternativeName>
            <fullName evidence="1">N-acetylglucosamine-1-phosphate uridyltransferase</fullName>
        </alternativeName>
    </domain>
    <domain>
        <recommendedName>
            <fullName evidence="1">Glucosamine-1-phosphate N-acetyltransferase</fullName>
            <ecNumber evidence="1">2.3.1.157</ecNumber>
        </recommendedName>
    </domain>
</protein>
<feature type="chain" id="PRO_0000337735" description="Bifunctional protein GlmU">
    <location>
        <begin position="1"/>
        <end position="492"/>
    </location>
</feature>
<feature type="region of interest" description="Pyrophosphorylase" evidence="1">
    <location>
        <begin position="1"/>
        <end position="238"/>
    </location>
</feature>
<feature type="region of interest" description="Linker" evidence="1">
    <location>
        <begin position="239"/>
        <end position="259"/>
    </location>
</feature>
<feature type="region of interest" description="N-acetyltransferase" evidence="1">
    <location>
        <begin position="260"/>
        <end position="492"/>
    </location>
</feature>
<feature type="region of interest" description="Disordered" evidence="2">
    <location>
        <begin position="469"/>
        <end position="492"/>
    </location>
</feature>
<feature type="compositionally biased region" description="Low complexity" evidence="2">
    <location>
        <begin position="469"/>
        <end position="483"/>
    </location>
</feature>
<feature type="active site" description="Proton acceptor" evidence="1">
    <location>
        <position position="371"/>
    </location>
</feature>
<feature type="binding site" evidence="1">
    <location>
        <begin position="9"/>
        <end position="12"/>
    </location>
    <ligand>
        <name>UDP-N-acetyl-alpha-D-glucosamine</name>
        <dbReference type="ChEBI" id="CHEBI:57705"/>
    </ligand>
</feature>
<feature type="binding site" evidence="1">
    <location>
        <position position="23"/>
    </location>
    <ligand>
        <name>UDP-N-acetyl-alpha-D-glucosamine</name>
        <dbReference type="ChEBI" id="CHEBI:57705"/>
    </ligand>
</feature>
<feature type="binding site" evidence="1">
    <location>
        <position position="80"/>
    </location>
    <ligand>
        <name>UDP-N-acetyl-alpha-D-glucosamine</name>
        <dbReference type="ChEBI" id="CHEBI:57705"/>
    </ligand>
</feature>
<feature type="binding site" evidence="1">
    <location>
        <begin position="85"/>
        <end position="86"/>
    </location>
    <ligand>
        <name>UDP-N-acetyl-alpha-D-glucosamine</name>
        <dbReference type="ChEBI" id="CHEBI:57705"/>
    </ligand>
</feature>
<feature type="binding site" evidence="1">
    <location>
        <position position="111"/>
    </location>
    <ligand>
        <name>Mg(2+)</name>
        <dbReference type="ChEBI" id="CHEBI:18420"/>
    </ligand>
</feature>
<feature type="binding site" evidence="1">
    <location>
        <position position="148"/>
    </location>
    <ligand>
        <name>UDP-N-acetyl-alpha-D-glucosamine</name>
        <dbReference type="ChEBI" id="CHEBI:57705"/>
    </ligand>
</feature>
<feature type="binding site" evidence="1">
    <location>
        <position position="163"/>
    </location>
    <ligand>
        <name>UDP-N-acetyl-alpha-D-glucosamine</name>
        <dbReference type="ChEBI" id="CHEBI:57705"/>
    </ligand>
</feature>
<feature type="binding site" evidence="1">
    <location>
        <position position="178"/>
    </location>
    <ligand>
        <name>UDP-N-acetyl-alpha-D-glucosamine</name>
        <dbReference type="ChEBI" id="CHEBI:57705"/>
    </ligand>
</feature>
<feature type="binding site" evidence="1">
    <location>
        <position position="236"/>
    </location>
    <ligand>
        <name>Mg(2+)</name>
        <dbReference type="ChEBI" id="CHEBI:18420"/>
    </ligand>
</feature>
<feature type="binding site" evidence="1">
    <location>
        <position position="236"/>
    </location>
    <ligand>
        <name>UDP-N-acetyl-alpha-D-glucosamine</name>
        <dbReference type="ChEBI" id="CHEBI:57705"/>
    </ligand>
</feature>
<feature type="binding site" evidence="1">
    <location>
        <position position="341"/>
    </location>
    <ligand>
        <name>UDP-N-acetyl-alpha-D-glucosamine</name>
        <dbReference type="ChEBI" id="CHEBI:57705"/>
    </ligand>
</feature>
<feature type="binding site" evidence="1">
    <location>
        <position position="359"/>
    </location>
    <ligand>
        <name>UDP-N-acetyl-alpha-D-glucosamine</name>
        <dbReference type="ChEBI" id="CHEBI:57705"/>
    </ligand>
</feature>
<feature type="binding site" evidence="1">
    <location>
        <position position="374"/>
    </location>
    <ligand>
        <name>UDP-N-acetyl-alpha-D-glucosamine</name>
        <dbReference type="ChEBI" id="CHEBI:57705"/>
    </ligand>
</feature>
<feature type="binding site" evidence="1">
    <location>
        <position position="385"/>
    </location>
    <ligand>
        <name>UDP-N-acetyl-alpha-D-glucosamine</name>
        <dbReference type="ChEBI" id="CHEBI:57705"/>
    </ligand>
</feature>
<feature type="binding site" evidence="1">
    <location>
        <position position="388"/>
    </location>
    <ligand>
        <name>acetyl-CoA</name>
        <dbReference type="ChEBI" id="CHEBI:57288"/>
    </ligand>
</feature>
<feature type="binding site" evidence="1">
    <location>
        <begin position="394"/>
        <end position="395"/>
    </location>
    <ligand>
        <name>acetyl-CoA</name>
        <dbReference type="ChEBI" id="CHEBI:57288"/>
    </ligand>
</feature>
<feature type="binding site" evidence="1">
    <location>
        <position position="413"/>
    </location>
    <ligand>
        <name>acetyl-CoA</name>
        <dbReference type="ChEBI" id="CHEBI:57288"/>
    </ligand>
</feature>
<feature type="binding site" evidence="1">
    <location>
        <position position="431"/>
    </location>
    <ligand>
        <name>acetyl-CoA</name>
        <dbReference type="ChEBI" id="CHEBI:57288"/>
    </ligand>
</feature>
<proteinExistence type="inferred from homology"/>
<comment type="function">
    <text evidence="1">Catalyzes the last two sequential reactions in the de novo biosynthetic pathway for UDP-N-acetylglucosamine (UDP-GlcNAc). The C-terminal domain catalyzes the transfer of acetyl group from acetyl coenzyme A to glucosamine-1-phosphate (GlcN-1-P) to produce N-acetylglucosamine-1-phosphate (GlcNAc-1-P), which is converted into UDP-GlcNAc by the transfer of uridine 5-monophosphate (from uridine 5-triphosphate), a reaction catalyzed by the N-terminal domain.</text>
</comment>
<comment type="catalytic activity">
    <reaction evidence="1">
        <text>alpha-D-glucosamine 1-phosphate + acetyl-CoA = N-acetyl-alpha-D-glucosamine 1-phosphate + CoA + H(+)</text>
        <dbReference type="Rhea" id="RHEA:13725"/>
        <dbReference type="ChEBI" id="CHEBI:15378"/>
        <dbReference type="ChEBI" id="CHEBI:57287"/>
        <dbReference type="ChEBI" id="CHEBI:57288"/>
        <dbReference type="ChEBI" id="CHEBI:57776"/>
        <dbReference type="ChEBI" id="CHEBI:58516"/>
        <dbReference type="EC" id="2.3.1.157"/>
    </reaction>
</comment>
<comment type="catalytic activity">
    <reaction evidence="1">
        <text>N-acetyl-alpha-D-glucosamine 1-phosphate + UTP + H(+) = UDP-N-acetyl-alpha-D-glucosamine + diphosphate</text>
        <dbReference type="Rhea" id="RHEA:13509"/>
        <dbReference type="ChEBI" id="CHEBI:15378"/>
        <dbReference type="ChEBI" id="CHEBI:33019"/>
        <dbReference type="ChEBI" id="CHEBI:46398"/>
        <dbReference type="ChEBI" id="CHEBI:57705"/>
        <dbReference type="ChEBI" id="CHEBI:57776"/>
        <dbReference type="EC" id="2.7.7.23"/>
    </reaction>
</comment>
<comment type="cofactor">
    <cofactor evidence="1">
        <name>Mg(2+)</name>
        <dbReference type="ChEBI" id="CHEBI:18420"/>
    </cofactor>
    <text evidence="1">Binds 1 Mg(2+) ion per subunit.</text>
</comment>
<comment type="pathway">
    <text evidence="1">Nucleotide-sugar biosynthesis; UDP-N-acetyl-alpha-D-glucosamine biosynthesis; N-acetyl-alpha-D-glucosamine 1-phosphate from alpha-D-glucosamine 6-phosphate (route II): step 2/2.</text>
</comment>
<comment type="pathway">
    <text evidence="1">Nucleotide-sugar biosynthesis; UDP-N-acetyl-alpha-D-glucosamine biosynthesis; UDP-N-acetyl-alpha-D-glucosamine from N-acetyl-alpha-D-glucosamine 1-phosphate: step 1/1.</text>
</comment>
<comment type="pathway">
    <text evidence="1">Bacterial outer membrane biogenesis; LPS lipid A biosynthesis.</text>
</comment>
<comment type="subunit">
    <text evidence="1">Homotrimer.</text>
</comment>
<comment type="subcellular location">
    <subcellularLocation>
        <location evidence="1">Cytoplasm</location>
    </subcellularLocation>
</comment>
<comment type="similarity">
    <text evidence="1">In the N-terminal section; belongs to the N-acetylglucosamine-1-phosphate uridyltransferase family.</text>
</comment>
<comment type="similarity">
    <text evidence="1">In the C-terminal section; belongs to the transferase hexapeptide repeat family.</text>
</comment>
<keyword id="KW-0012">Acyltransferase</keyword>
<keyword id="KW-0133">Cell shape</keyword>
<keyword id="KW-0961">Cell wall biogenesis/degradation</keyword>
<keyword id="KW-0963">Cytoplasm</keyword>
<keyword id="KW-0460">Magnesium</keyword>
<keyword id="KW-0479">Metal-binding</keyword>
<keyword id="KW-0511">Multifunctional enzyme</keyword>
<keyword id="KW-0548">Nucleotidyltransferase</keyword>
<keyword id="KW-0573">Peptidoglycan synthesis</keyword>
<keyword id="KW-0677">Repeat</keyword>
<keyword id="KW-0808">Transferase</keyword>
<organism>
    <name type="scientific">Mycolicibacterium vanbaalenii (strain DSM 7251 / JCM 13017 / BCRC 16820 / KCTC 9966 / NRRL B-24157 / PYR-1)</name>
    <name type="common">Mycobacterium vanbaalenii</name>
    <dbReference type="NCBI Taxonomy" id="350058"/>
    <lineage>
        <taxon>Bacteria</taxon>
        <taxon>Bacillati</taxon>
        <taxon>Actinomycetota</taxon>
        <taxon>Actinomycetes</taxon>
        <taxon>Mycobacteriales</taxon>
        <taxon>Mycobacteriaceae</taxon>
        <taxon>Mycolicibacterium</taxon>
    </lineage>
</organism>
<reference key="1">
    <citation type="submission" date="2006-12" db="EMBL/GenBank/DDBJ databases">
        <title>Complete sequence of Mycobacterium vanbaalenii PYR-1.</title>
        <authorList>
            <consortium name="US DOE Joint Genome Institute"/>
            <person name="Copeland A."/>
            <person name="Lucas S."/>
            <person name="Lapidus A."/>
            <person name="Barry K."/>
            <person name="Detter J.C."/>
            <person name="Glavina del Rio T."/>
            <person name="Hammon N."/>
            <person name="Israni S."/>
            <person name="Dalin E."/>
            <person name="Tice H."/>
            <person name="Pitluck S."/>
            <person name="Singan V."/>
            <person name="Schmutz J."/>
            <person name="Larimer F."/>
            <person name="Land M."/>
            <person name="Hauser L."/>
            <person name="Kyrpides N."/>
            <person name="Anderson I.J."/>
            <person name="Miller C."/>
            <person name="Richardson P."/>
        </authorList>
    </citation>
    <scope>NUCLEOTIDE SEQUENCE [LARGE SCALE GENOMIC DNA]</scope>
    <source>
        <strain>DSM 7251 / JCM 13017 / BCRC 16820 / KCTC 9966 / NRRL B-24157 / PYR-1</strain>
    </source>
</reference>
<name>GLMU_MYCVP</name>
<dbReference type="EC" id="2.7.7.23" evidence="1"/>
<dbReference type="EC" id="2.3.1.157" evidence="1"/>
<dbReference type="EMBL" id="CP000511">
    <property type="protein sequence ID" value="ABM15555.1"/>
    <property type="molecule type" value="Genomic_DNA"/>
</dbReference>
<dbReference type="RefSeq" id="WP_011781929.1">
    <property type="nucleotide sequence ID" value="NZ_JACKSD010000094.1"/>
</dbReference>
<dbReference type="SMR" id="A1TEF5"/>
<dbReference type="STRING" id="350058.Mvan_4782"/>
<dbReference type="KEGG" id="mva:Mvan_4782"/>
<dbReference type="eggNOG" id="COG1207">
    <property type="taxonomic scope" value="Bacteria"/>
</dbReference>
<dbReference type="HOGENOM" id="CLU_029499_15_2_11"/>
<dbReference type="UniPathway" id="UPA00113">
    <property type="reaction ID" value="UER00532"/>
</dbReference>
<dbReference type="UniPathway" id="UPA00113">
    <property type="reaction ID" value="UER00533"/>
</dbReference>
<dbReference type="UniPathway" id="UPA00973"/>
<dbReference type="Proteomes" id="UP000009159">
    <property type="component" value="Chromosome"/>
</dbReference>
<dbReference type="GO" id="GO:0005737">
    <property type="term" value="C:cytoplasm"/>
    <property type="evidence" value="ECO:0007669"/>
    <property type="project" value="UniProtKB-SubCell"/>
</dbReference>
<dbReference type="GO" id="GO:0016020">
    <property type="term" value="C:membrane"/>
    <property type="evidence" value="ECO:0007669"/>
    <property type="project" value="GOC"/>
</dbReference>
<dbReference type="GO" id="GO:0019134">
    <property type="term" value="F:glucosamine-1-phosphate N-acetyltransferase activity"/>
    <property type="evidence" value="ECO:0007669"/>
    <property type="project" value="UniProtKB-UniRule"/>
</dbReference>
<dbReference type="GO" id="GO:0000287">
    <property type="term" value="F:magnesium ion binding"/>
    <property type="evidence" value="ECO:0007669"/>
    <property type="project" value="UniProtKB-UniRule"/>
</dbReference>
<dbReference type="GO" id="GO:0003977">
    <property type="term" value="F:UDP-N-acetylglucosamine diphosphorylase activity"/>
    <property type="evidence" value="ECO:0007669"/>
    <property type="project" value="UniProtKB-UniRule"/>
</dbReference>
<dbReference type="GO" id="GO:0000902">
    <property type="term" value="P:cell morphogenesis"/>
    <property type="evidence" value="ECO:0007669"/>
    <property type="project" value="UniProtKB-UniRule"/>
</dbReference>
<dbReference type="GO" id="GO:0071555">
    <property type="term" value="P:cell wall organization"/>
    <property type="evidence" value="ECO:0007669"/>
    <property type="project" value="UniProtKB-KW"/>
</dbReference>
<dbReference type="GO" id="GO:0009245">
    <property type="term" value="P:lipid A biosynthetic process"/>
    <property type="evidence" value="ECO:0007669"/>
    <property type="project" value="UniProtKB-UniRule"/>
</dbReference>
<dbReference type="GO" id="GO:0009252">
    <property type="term" value="P:peptidoglycan biosynthetic process"/>
    <property type="evidence" value="ECO:0007669"/>
    <property type="project" value="UniProtKB-UniRule"/>
</dbReference>
<dbReference type="GO" id="GO:0008360">
    <property type="term" value="P:regulation of cell shape"/>
    <property type="evidence" value="ECO:0007669"/>
    <property type="project" value="UniProtKB-KW"/>
</dbReference>
<dbReference type="GO" id="GO:0006048">
    <property type="term" value="P:UDP-N-acetylglucosamine biosynthetic process"/>
    <property type="evidence" value="ECO:0007669"/>
    <property type="project" value="UniProtKB-UniPathway"/>
</dbReference>
<dbReference type="CDD" id="cd02540">
    <property type="entry name" value="GT2_GlmU_N_bac"/>
    <property type="match status" value="1"/>
</dbReference>
<dbReference type="CDD" id="cd03353">
    <property type="entry name" value="LbH_GlmU_C"/>
    <property type="match status" value="1"/>
</dbReference>
<dbReference type="Gene3D" id="2.160.10.10">
    <property type="entry name" value="Hexapeptide repeat proteins"/>
    <property type="match status" value="1"/>
</dbReference>
<dbReference type="Gene3D" id="3.90.550.10">
    <property type="entry name" value="Spore Coat Polysaccharide Biosynthesis Protein SpsA, Chain A"/>
    <property type="match status" value="1"/>
</dbReference>
<dbReference type="HAMAP" id="MF_01631">
    <property type="entry name" value="GlmU"/>
    <property type="match status" value="1"/>
</dbReference>
<dbReference type="InterPro" id="IPR005882">
    <property type="entry name" value="Bifunctional_GlmU"/>
</dbReference>
<dbReference type="InterPro" id="IPR050065">
    <property type="entry name" value="GlmU-like"/>
</dbReference>
<dbReference type="InterPro" id="IPR038009">
    <property type="entry name" value="GlmU_C_LbH"/>
</dbReference>
<dbReference type="InterPro" id="IPR025877">
    <property type="entry name" value="MobA-like_NTP_Trfase"/>
</dbReference>
<dbReference type="InterPro" id="IPR029044">
    <property type="entry name" value="Nucleotide-diphossugar_trans"/>
</dbReference>
<dbReference type="InterPro" id="IPR011004">
    <property type="entry name" value="Trimer_LpxA-like_sf"/>
</dbReference>
<dbReference type="NCBIfam" id="TIGR01173">
    <property type="entry name" value="glmU"/>
    <property type="match status" value="1"/>
</dbReference>
<dbReference type="NCBIfam" id="NF010932">
    <property type="entry name" value="PRK14352.1"/>
    <property type="match status" value="1"/>
</dbReference>
<dbReference type="PANTHER" id="PTHR43584:SF3">
    <property type="entry name" value="BIFUNCTIONAL PROTEIN GLMU"/>
    <property type="match status" value="1"/>
</dbReference>
<dbReference type="PANTHER" id="PTHR43584">
    <property type="entry name" value="NUCLEOTIDYL TRANSFERASE"/>
    <property type="match status" value="1"/>
</dbReference>
<dbReference type="Pfam" id="PF12804">
    <property type="entry name" value="NTP_transf_3"/>
    <property type="match status" value="1"/>
</dbReference>
<dbReference type="SUPFAM" id="SSF53448">
    <property type="entry name" value="Nucleotide-diphospho-sugar transferases"/>
    <property type="match status" value="1"/>
</dbReference>
<dbReference type="SUPFAM" id="SSF51161">
    <property type="entry name" value="Trimeric LpxA-like enzymes"/>
    <property type="match status" value="1"/>
</dbReference>